<gene>
    <name evidence="1" type="primary">aspS</name>
    <name type="ordered locus">xcc-b100_1166</name>
</gene>
<reference key="1">
    <citation type="journal article" date="2008" name="J. Biotechnol.">
        <title>The genome of Xanthomonas campestris pv. campestris B100 and its use for the reconstruction of metabolic pathways involved in xanthan biosynthesis.</title>
        <authorList>
            <person name="Vorhoelter F.-J."/>
            <person name="Schneiker S."/>
            <person name="Goesmann A."/>
            <person name="Krause L."/>
            <person name="Bekel T."/>
            <person name="Kaiser O."/>
            <person name="Linke B."/>
            <person name="Patschkowski T."/>
            <person name="Rueckert C."/>
            <person name="Schmid J."/>
            <person name="Sidhu V.K."/>
            <person name="Sieber V."/>
            <person name="Tauch A."/>
            <person name="Watt S.A."/>
            <person name="Weisshaar B."/>
            <person name="Becker A."/>
            <person name="Niehaus K."/>
            <person name="Puehler A."/>
        </authorList>
    </citation>
    <scope>NUCLEOTIDE SEQUENCE [LARGE SCALE GENOMIC DNA]</scope>
    <source>
        <strain>B100</strain>
    </source>
</reference>
<name>SYD_XANCB</name>
<sequence length="588" mass="64888">MRTHFCGLVDETLIGQTVTLAGWTDVARNLGGVCFIDLRDHEGIVQVTVEPAEGDANSAEVFKVAASLGYEDVLQVEGVVRARHAVNDKIRTGKVEVIATRITILNKAAPLPFHAHENPGEDTRLKYRYLDLRRPEMQRMQRTRIKLVQALRRHLDARDFQDIETPILTKATPEGARDFLVPARMHPGEFYALPQSPQLFKQILMVAGFDRYYQIARCFRDEALRADRQLEFTQLDMEFAFVRERDVQDFVEDMIRAIFKEVVDVELAAQFPRMTWAEAMRRYGSDKPDLRIALELVDVAELVKTSEFPVFAAAANDADGRVAALRIPGGATLSRKQIDDYAAHAAKYGAKGLAYIKLSESGEVSSPIAKFFGEEAFAALLAHVGAANGDIVFFGAGSYNKVSDFMGALRLKAGKDFGLVAAGWAPLWVTDFPMFEWDEEAQRYVALHHPFTAPAVDDIADLRANARTAVSRGYDMVLNGNEIGGGSIRIHRPDMQSAVFELLGIGAEEARAKFGFLLDALNYGAPPHGGIAFGIDRIAALMAGTESIRDVIPFPKTTGAQDLMTDAPSPIAAEQLAEVHVQVRPKQA</sequence>
<protein>
    <recommendedName>
        <fullName evidence="1">Aspartate--tRNA ligase</fullName>
        <ecNumber evidence="1">6.1.1.12</ecNumber>
    </recommendedName>
    <alternativeName>
        <fullName evidence="1">Aspartyl-tRNA synthetase</fullName>
        <shortName evidence="1">AspRS</shortName>
    </alternativeName>
</protein>
<organism>
    <name type="scientific">Xanthomonas campestris pv. campestris (strain B100)</name>
    <dbReference type="NCBI Taxonomy" id="509169"/>
    <lineage>
        <taxon>Bacteria</taxon>
        <taxon>Pseudomonadati</taxon>
        <taxon>Pseudomonadota</taxon>
        <taxon>Gammaproteobacteria</taxon>
        <taxon>Lysobacterales</taxon>
        <taxon>Lysobacteraceae</taxon>
        <taxon>Xanthomonas</taxon>
    </lineage>
</organism>
<dbReference type="EC" id="6.1.1.12" evidence="1"/>
<dbReference type="EMBL" id="AM920689">
    <property type="protein sequence ID" value="CAP50514.1"/>
    <property type="molecule type" value="Genomic_DNA"/>
</dbReference>
<dbReference type="SMR" id="B0RPX9"/>
<dbReference type="KEGG" id="xca:xcc-b100_1166"/>
<dbReference type="HOGENOM" id="CLU_014330_3_2_6"/>
<dbReference type="Proteomes" id="UP000001188">
    <property type="component" value="Chromosome"/>
</dbReference>
<dbReference type="GO" id="GO:0005737">
    <property type="term" value="C:cytoplasm"/>
    <property type="evidence" value="ECO:0007669"/>
    <property type="project" value="UniProtKB-SubCell"/>
</dbReference>
<dbReference type="GO" id="GO:0004815">
    <property type="term" value="F:aspartate-tRNA ligase activity"/>
    <property type="evidence" value="ECO:0007669"/>
    <property type="project" value="UniProtKB-UniRule"/>
</dbReference>
<dbReference type="GO" id="GO:0005524">
    <property type="term" value="F:ATP binding"/>
    <property type="evidence" value="ECO:0007669"/>
    <property type="project" value="UniProtKB-UniRule"/>
</dbReference>
<dbReference type="GO" id="GO:0003676">
    <property type="term" value="F:nucleic acid binding"/>
    <property type="evidence" value="ECO:0007669"/>
    <property type="project" value="InterPro"/>
</dbReference>
<dbReference type="GO" id="GO:0006422">
    <property type="term" value="P:aspartyl-tRNA aminoacylation"/>
    <property type="evidence" value="ECO:0007669"/>
    <property type="project" value="UniProtKB-UniRule"/>
</dbReference>
<dbReference type="CDD" id="cd00777">
    <property type="entry name" value="AspRS_core"/>
    <property type="match status" value="1"/>
</dbReference>
<dbReference type="CDD" id="cd04317">
    <property type="entry name" value="EcAspRS_like_N"/>
    <property type="match status" value="1"/>
</dbReference>
<dbReference type="Gene3D" id="3.30.930.10">
    <property type="entry name" value="Bira Bifunctional Protein, Domain 2"/>
    <property type="match status" value="1"/>
</dbReference>
<dbReference type="Gene3D" id="3.30.1360.30">
    <property type="entry name" value="GAD-like domain"/>
    <property type="match status" value="1"/>
</dbReference>
<dbReference type="Gene3D" id="2.40.50.140">
    <property type="entry name" value="Nucleic acid-binding proteins"/>
    <property type="match status" value="1"/>
</dbReference>
<dbReference type="HAMAP" id="MF_00044">
    <property type="entry name" value="Asp_tRNA_synth_type1"/>
    <property type="match status" value="1"/>
</dbReference>
<dbReference type="InterPro" id="IPR004364">
    <property type="entry name" value="Aa-tRNA-synt_II"/>
</dbReference>
<dbReference type="InterPro" id="IPR006195">
    <property type="entry name" value="aa-tRNA-synth_II"/>
</dbReference>
<dbReference type="InterPro" id="IPR045864">
    <property type="entry name" value="aa-tRNA-synth_II/BPL/LPL"/>
</dbReference>
<dbReference type="InterPro" id="IPR004524">
    <property type="entry name" value="Asp-tRNA-ligase_1"/>
</dbReference>
<dbReference type="InterPro" id="IPR047089">
    <property type="entry name" value="Asp-tRNA-ligase_1_N"/>
</dbReference>
<dbReference type="InterPro" id="IPR002312">
    <property type="entry name" value="Asp/Asn-tRNA-synth_IIb"/>
</dbReference>
<dbReference type="InterPro" id="IPR047090">
    <property type="entry name" value="AspRS_core"/>
</dbReference>
<dbReference type="InterPro" id="IPR004115">
    <property type="entry name" value="GAD-like_sf"/>
</dbReference>
<dbReference type="InterPro" id="IPR029351">
    <property type="entry name" value="GAD_dom"/>
</dbReference>
<dbReference type="InterPro" id="IPR012340">
    <property type="entry name" value="NA-bd_OB-fold"/>
</dbReference>
<dbReference type="InterPro" id="IPR004365">
    <property type="entry name" value="NA-bd_OB_tRNA"/>
</dbReference>
<dbReference type="NCBIfam" id="TIGR00459">
    <property type="entry name" value="aspS_bact"/>
    <property type="match status" value="1"/>
</dbReference>
<dbReference type="NCBIfam" id="NF001750">
    <property type="entry name" value="PRK00476.1"/>
    <property type="match status" value="1"/>
</dbReference>
<dbReference type="PANTHER" id="PTHR22594:SF5">
    <property type="entry name" value="ASPARTATE--TRNA LIGASE, MITOCHONDRIAL"/>
    <property type="match status" value="1"/>
</dbReference>
<dbReference type="PANTHER" id="PTHR22594">
    <property type="entry name" value="ASPARTYL/LYSYL-TRNA SYNTHETASE"/>
    <property type="match status" value="1"/>
</dbReference>
<dbReference type="Pfam" id="PF02938">
    <property type="entry name" value="GAD"/>
    <property type="match status" value="1"/>
</dbReference>
<dbReference type="Pfam" id="PF00152">
    <property type="entry name" value="tRNA-synt_2"/>
    <property type="match status" value="1"/>
</dbReference>
<dbReference type="Pfam" id="PF01336">
    <property type="entry name" value="tRNA_anti-codon"/>
    <property type="match status" value="1"/>
</dbReference>
<dbReference type="PRINTS" id="PR01042">
    <property type="entry name" value="TRNASYNTHASP"/>
</dbReference>
<dbReference type="SUPFAM" id="SSF55681">
    <property type="entry name" value="Class II aaRS and biotin synthetases"/>
    <property type="match status" value="1"/>
</dbReference>
<dbReference type="SUPFAM" id="SSF55261">
    <property type="entry name" value="GAD domain-like"/>
    <property type="match status" value="1"/>
</dbReference>
<dbReference type="SUPFAM" id="SSF50249">
    <property type="entry name" value="Nucleic acid-binding proteins"/>
    <property type="match status" value="1"/>
</dbReference>
<dbReference type="PROSITE" id="PS50862">
    <property type="entry name" value="AA_TRNA_LIGASE_II"/>
    <property type="match status" value="1"/>
</dbReference>
<evidence type="ECO:0000255" key="1">
    <source>
        <dbReference type="HAMAP-Rule" id="MF_00044"/>
    </source>
</evidence>
<feature type="chain" id="PRO_1000091061" description="Aspartate--tRNA ligase">
    <location>
        <begin position="1"/>
        <end position="588"/>
    </location>
</feature>
<feature type="region of interest" description="Aspartate" evidence="1">
    <location>
        <begin position="198"/>
        <end position="201"/>
    </location>
</feature>
<feature type="binding site" evidence="1">
    <location>
        <position position="174"/>
    </location>
    <ligand>
        <name>L-aspartate</name>
        <dbReference type="ChEBI" id="CHEBI:29991"/>
    </ligand>
</feature>
<feature type="binding site" evidence="1">
    <location>
        <begin position="220"/>
        <end position="222"/>
    </location>
    <ligand>
        <name>ATP</name>
        <dbReference type="ChEBI" id="CHEBI:30616"/>
    </ligand>
</feature>
<feature type="binding site" evidence="1">
    <location>
        <position position="220"/>
    </location>
    <ligand>
        <name>L-aspartate</name>
        <dbReference type="ChEBI" id="CHEBI:29991"/>
    </ligand>
</feature>
<feature type="binding site" evidence="1">
    <location>
        <position position="229"/>
    </location>
    <ligand>
        <name>ATP</name>
        <dbReference type="ChEBI" id="CHEBI:30616"/>
    </ligand>
</feature>
<feature type="binding site" evidence="1">
    <location>
        <position position="448"/>
    </location>
    <ligand>
        <name>L-aspartate</name>
        <dbReference type="ChEBI" id="CHEBI:29991"/>
    </ligand>
</feature>
<feature type="binding site" evidence="1">
    <location>
        <position position="482"/>
    </location>
    <ligand>
        <name>ATP</name>
        <dbReference type="ChEBI" id="CHEBI:30616"/>
    </ligand>
</feature>
<feature type="binding site" evidence="1">
    <location>
        <position position="489"/>
    </location>
    <ligand>
        <name>L-aspartate</name>
        <dbReference type="ChEBI" id="CHEBI:29991"/>
    </ligand>
</feature>
<feature type="binding site" evidence="1">
    <location>
        <begin position="534"/>
        <end position="537"/>
    </location>
    <ligand>
        <name>ATP</name>
        <dbReference type="ChEBI" id="CHEBI:30616"/>
    </ligand>
</feature>
<accession>B0RPX9</accession>
<proteinExistence type="inferred from homology"/>
<keyword id="KW-0030">Aminoacyl-tRNA synthetase</keyword>
<keyword id="KW-0067">ATP-binding</keyword>
<keyword id="KW-0963">Cytoplasm</keyword>
<keyword id="KW-0436">Ligase</keyword>
<keyword id="KW-0547">Nucleotide-binding</keyword>
<keyword id="KW-0648">Protein biosynthesis</keyword>
<comment type="function">
    <text evidence="1">Catalyzes the attachment of L-aspartate to tRNA(Asp) in a two-step reaction: L-aspartate is first activated by ATP to form Asp-AMP and then transferred to the acceptor end of tRNA(Asp).</text>
</comment>
<comment type="catalytic activity">
    <reaction evidence="1">
        <text>tRNA(Asp) + L-aspartate + ATP = L-aspartyl-tRNA(Asp) + AMP + diphosphate</text>
        <dbReference type="Rhea" id="RHEA:19649"/>
        <dbReference type="Rhea" id="RHEA-COMP:9660"/>
        <dbReference type="Rhea" id="RHEA-COMP:9678"/>
        <dbReference type="ChEBI" id="CHEBI:29991"/>
        <dbReference type="ChEBI" id="CHEBI:30616"/>
        <dbReference type="ChEBI" id="CHEBI:33019"/>
        <dbReference type="ChEBI" id="CHEBI:78442"/>
        <dbReference type="ChEBI" id="CHEBI:78516"/>
        <dbReference type="ChEBI" id="CHEBI:456215"/>
        <dbReference type="EC" id="6.1.1.12"/>
    </reaction>
</comment>
<comment type="subunit">
    <text evidence="1">Homodimer.</text>
</comment>
<comment type="subcellular location">
    <subcellularLocation>
        <location evidence="1">Cytoplasm</location>
    </subcellularLocation>
</comment>
<comment type="similarity">
    <text evidence="1">Belongs to the class-II aminoacyl-tRNA synthetase family. Type 1 subfamily.</text>
</comment>